<comment type="function">
    <text evidence="2">Catalyzes the formation of N(7)-methylguanine at position 46 (m7G46) in tRNA.</text>
</comment>
<comment type="catalytic activity">
    <reaction evidence="2">
        <text>guanosine(46) in tRNA + S-adenosyl-L-methionine = N(7)-methylguanosine(46) in tRNA + S-adenosyl-L-homocysteine</text>
        <dbReference type="Rhea" id="RHEA:42708"/>
        <dbReference type="Rhea" id="RHEA-COMP:10188"/>
        <dbReference type="Rhea" id="RHEA-COMP:10189"/>
        <dbReference type="ChEBI" id="CHEBI:57856"/>
        <dbReference type="ChEBI" id="CHEBI:59789"/>
        <dbReference type="ChEBI" id="CHEBI:74269"/>
        <dbReference type="ChEBI" id="CHEBI:74480"/>
        <dbReference type="EC" id="2.1.1.33"/>
    </reaction>
</comment>
<comment type="pathway">
    <text evidence="2">tRNA modification; N(7)-methylguanine-tRNA biosynthesis.</text>
</comment>
<comment type="similarity">
    <text evidence="2">Belongs to the class I-like SAM-binding methyltransferase superfamily. TrmB family.</text>
</comment>
<dbReference type="EC" id="2.1.1.33" evidence="2"/>
<dbReference type="EMBL" id="CP000248">
    <property type="protein sequence ID" value="ABD24753.1"/>
    <property type="molecule type" value="Genomic_DNA"/>
</dbReference>
<dbReference type="RefSeq" id="WP_011443967.1">
    <property type="nucleotide sequence ID" value="NC_007794.1"/>
</dbReference>
<dbReference type="SMR" id="Q2GBM0"/>
<dbReference type="STRING" id="279238.Saro_0305"/>
<dbReference type="KEGG" id="nar:Saro_0305"/>
<dbReference type="eggNOG" id="COG0220">
    <property type="taxonomic scope" value="Bacteria"/>
</dbReference>
<dbReference type="HOGENOM" id="CLU_050910_0_3_5"/>
<dbReference type="UniPathway" id="UPA00989"/>
<dbReference type="Proteomes" id="UP000009134">
    <property type="component" value="Chromosome"/>
</dbReference>
<dbReference type="GO" id="GO:0043527">
    <property type="term" value="C:tRNA methyltransferase complex"/>
    <property type="evidence" value="ECO:0007669"/>
    <property type="project" value="TreeGrafter"/>
</dbReference>
<dbReference type="GO" id="GO:0008176">
    <property type="term" value="F:tRNA (guanine(46)-N7)-methyltransferase activity"/>
    <property type="evidence" value="ECO:0007669"/>
    <property type="project" value="UniProtKB-UniRule"/>
</dbReference>
<dbReference type="Gene3D" id="3.40.50.150">
    <property type="entry name" value="Vaccinia Virus protein VP39"/>
    <property type="match status" value="1"/>
</dbReference>
<dbReference type="HAMAP" id="MF_01057">
    <property type="entry name" value="tRNA_methyltr_TrmB"/>
    <property type="match status" value="1"/>
</dbReference>
<dbReference type="InterPro" id="IPR029063">
    <property type="entry name" value="SAM-dependent_MTases_sf"/>
</dbReference>
<dbReference type="InterPro" id="IPR003358">
    <property type="entry name" value="tRNA_(Gua-N-7)_MeTrfase_Trmb"/>
</dbReference>
<dbReference type="InterPro" id="IPR055361">
    <property type="entry name" value="tRNA_methyltr_TrmB_bact"/>
</dbReference>
<dbReference type="PANTHER" id="PTHR23417">
    <property type="entry name" value="3-DEOXY-D-MANNO-OCTULOSONIC-ACID TRANSFERASE/TRNA GUANINE-N 7 - -METHYLTRANSFERASE"/>
    <property type="match status" value="1"/>
</dbReference>
<dbReference type="PANTHER" id="PTHR23417:SF14">
    <property type="entry name" value="PENTACOTRIPEPTIDE-REPEAT REGION OF PRORP DOMAIN-CONTAINING PROTEIN"/>
    <property type="match status" value="1"/>
</dbReference>
<dbReference type="Pfam" id="PF02390">
    <property type="entry name" value="Methyltransf_4"/>
    <property type="match status" value="1"/>
</dbReference>
<dbReference type="SUPFAM" id="SSF53335">
    <property type="entry name" value="S-adenosyl-L-methionine-dependent methyltransferases"/>
    <property type="match status" value="1"/>
</dbReference>
<dbReference type="PROSITE" id="PS51625">
    <property type="entry name" value="SAM_MT_TRMB"/>
    <property type="match status" value="1"/>
</dbReference>
<proteinExistence type="inferred from homology"/>
<name>TRMB_NOVAD</name>
<accession>Q2GBM0</accession>
<organism>
    <name type="scientific">Novosphingobium aromaticivorans (strain ATCC 700278 / DSM 12444 / CCUG 56034 / CIP 105152 / NBRC 16084 / F199)</name>
    <dbReference type="NCBI Taxonomy" id="279238"/>
    <lineage>
        <taxon>Bacteria</taxon>
        <taxon>Pseudomonadati</taxon>
        <taxon>Pseudomonadota</taxon>
        <taxon>Alphaproteobacteria</taxon>
        <taxon>Sphingomonadales</taxon>
        <taxon>Sphingomonadaceae</taxon>
        <taxon>Novosphingobium</taxon>
    </lineage>
</organism>
<keyword id="KW-0489">Methyltransferase</keyword>
<keyword id="KW-1185">Reference proteome</keyword>
<keyword id="KW-0949">S-adenosyl-L-methionine</keyword>
<keyword id="KW-0808">Transferase</keyword>
<keyword id="KW-0819">tRNA processing</keyword>
<feature type="chain" id="PRO_0000288192" description="tRNA (guanine-N(7)-)-methyltransferase">
    <location>
        <begin position="1"/>
        <end position="238"/>
    </location>
</feature>
<feature type="active site" evidence="1">
    <location>
        <position position="141"/>
    </location>
</feature>
<feature type="binding site" evidence="2">
    <location>
        <position position="62"/>
    </location>
    <ligand>
        <name>S-adenosyl-L-methionine</name>
        <dbReference type="ChEBI" id="CHEBI:59789"/>
    </ligand>
</feature>
<feature type="binding site" evidence="2">
    <location>
        <position position="87"/>
    </location>
    <ligand>
        <name>S-adenosyl-L-methionine</name>
        <dbReference type="ChEBI" id="CHEBI:59789"/>
    </ligand>
</feature>
<feature type="binding site" evidence="2">
    <location>
        <position position="119"/>
    </location>
    <ligand>
        <name>S-adenosyl-L-methionine</name>
        <dbReference type="ChEBI" id="CHEBI:59789"/>
    </ligand>
</feature>
<feature type="binding site" evidence="2">
    <location>
        <position position="141"/>
    </location>
    <ligand>
        <name>S-adenosyl-L-methionine</name>
        <dbReference type="ChEBI" id="CHEBI:59789"/>
    </ligand>
</feature>
<feature type="binding site" evidence="2">
    <location>
        <position position="145"/>
    </location>
    <ligand>
        <name>substrate</name>
    </ligand>
</feature>
<feature type="binding site" evidence="2">
    <location>
        <position position="177"/>
    </location>
    <ligand>
        <name>substrate</name>
    </ligand>
</feature>
<feature type="binding site" evidence="2">
    <location>
        <begin position="216"/>
        <end position="219"/>
    </location>
    <ligand>
        <name>substrate</name>
    </ligand>
</feature>
<protein>
    <recommendedName>
        <fullName evidence="2">tRNA (guanine-N(7)-)-methyltransferase</fullName>
        <ecNumber evidence="2">2.1.1.33</ecNumber>
    </recommendedName>
    <alternativeName>
        <fullName evidence="2">tRNA (guanine(46)-N(7))-methyltransferase</fullName>
    </alternativeName>
    <alternativeName>
        <fullName evidence="2">tRNA(m7G46)-methyltransferase</fullName>
    </alternativeName>
</protein>
<sequence length="238" mass="27165">MTAYKSGDPTTINRLYGRAKGKPLRQGQQALVDELLPQISMPAEGPITAEALFGEPRPLHFEIGFGGGEHMAFRADMLPDHGFIGAEPFLNGVAQALTHVSGDNGQHPPIPNVRIHHGDALEVLRRIPDGSLSFLYLLHPDPWPKARHAKRRMMNDGPVDLFAAKLRPGGEFRFGTDHAVYLRHALMVMRRHKHQFEWLAKDARDFQVRPGGWPETRYEHKARTVYGHEVWYFRFRRR</sequence>
<evidence type="ECO:0000250" key="1"/>
<evidence type="ECO:0000255" key="2">
    <source>
        <dbReference type="HAMAP-Rule" id="MF_01057"/>
    </source>
</evidence>
<gene>
    <name evidence="2" type="primary">trmB</name>
    <name type="ordered locus">Saro_0305</name>
</gene>
<reference key="1">
    <citation type="submission" date="2006-01" db="EMBL/GenBank/DDBJ databases">
        <title>Complete sequence of Novosphingobium aromaticivorans DSM 12444.</title>
        <authorList>
            <consortium name="US DOE Joint Genome Institute"/>
            <person name="Copeland A."/>
            <person name="Lucas S."/>
            <person name="Lapidus A."/>
            <person name="Barry K."/>
            <person name="Detter J.C."/>
            <person name="Glavina T."/>
            <person name="Hammon N."/>
            <person name="Israni S."/>
            <person name="Pitluck S."/>
            <person name="Chain P."/>
            <person name="Malfatti S."/>
            <person name="Shin M."/>
            <person name="Vergez L."/>
            <person name="Schmutz J."/>
            <person name="Larimer F."/>
            <person name="Land M."/>
            <person name="Kyrpides N."/>
            <person name="Ivanova N."/>
            <person name="Fredrickson J."/>
            <person name="Balkwill D."/>
            <person name="Romine M.F."/>
            <person name="Richardson P."/>
        </authorList>
    </citation>
    <scope>NUCLEOTIDE SEQUENCE [LARGE SCALE GENOMIC DNA]</scope>
    <source>
        <strain>ATCC 700278 / DSM 12444 / CCUG 56034 / CIP 105152 / NBRC 16084 / F199</strain>
    </source>
</reference>